<evidence type="ECO:0000250" key="1"/>
<evidence type="ECO:0000256" key="2">
    <source>
        <dbReference type="SAM" id="MobiDB-lite"/>
    </source>
</evidence>
<evidence type="ECO:0000305" key="3"/>
<organism>
    <name type="scientific">Torque teno virus (isolate Human/Finland/Hel32/2002)</name>
    <name type="common">TTV</name>
    <name type="synonym">Torque teno virus genotype 6</name>
    <dbReference type="NCBI Taxonomy" id="687342"/>
    <lineage>
        <taxon>Viruses</taxon>
        <taxon>Viruses incertae sedis</taxon>
        <taxon>Anelloviridae</taxon>
        <taxon>Alphatorquevirus</taxon>
        <taxon>Alphatorquevirus homin3</taxon>
    </lineage>
</organism>
<gene>
    <name type="ORF">ORF1</name>
</gene>
<accession>A7XCE4</accession>
<name>CAPSD_TTVV3</name>
<proteinExistence type="inferred from homology"/>
<reference key="1">
    <citation type="journal article" date="2002" name="J. Gen. Virol.">
        <title>Cloning and sequencing of TT virus genotype 6 and expression of antigenic open reading frame 2 proteins.</title>
        <authorList>
            <person name="Kakkola L."/>
            <person name="Hedman K."/>
            <person name="Vanrobaeys H."/>
            <person name="Hedman L."/>
            <person name="Soderlund-Venermo M."/>
        </authorList>
    </citation>
    <scope>NUCLEOTIDE SEQUENCE [GENOMIC DNA]</scope>
</reference>
<reference key="2">
    <citation type="journal article" date="2005" name="J. Virol.">
        <title>Human circovirus TT virus genotype 6 expresses six proteins following transfection of a full-length clone.</title>
        <authorList>
            <person name="Qiu J."/>
            <person name="Kakkola L."/>
            <person name="Cheng F."/>
            <person name="Ye C."/>
            <person name="Soderlund-Venermo M."/>
            <person name="Hedman K."/>
            <person name="Pintel D.J."/>
        </authorList>
    </citation>
    <scope>IDENTIFICATION</scope>
</reference>
<reference key="3">
    <citation type="journal article" date="2007" name="FEBS J.">
        <title>Construction and biological activity of a full-length molecular clone of human Torque teno virus (TTV) genotype 6.</title>
        <authorList>
            <person name="Kakkola L."/>
            <person name="Tommiska J."/>
            <person name="Boele L.C."/>
            <person name="Miettinen S."/>
            <person name="Blom T."/>
            <person name="Kekarainen T."/>
            <person name="Qiu J."/>
            <person name="Pintel D."/>
            <person name="Hoeben R.C."/>
            <person name="Hedman K."/>
            <person name="Soderlund-Venermo M."/>
        </authorList>
    </citation>
    <scope>INFECTIOUS CLONE</scope>
</reference>
<reference key="4">
    <citation type="journal article" date="2007" name="Rev. Med. Virol.">
        <title>Torque teno virus (TTV): current status.</title>
        <authorList>
            <person name="Hino S."/>
            <person name="Miyata H."/>
        </authorList>
    </citation>
    <scope>REVIEW</scope>
</reference>
<feature type="chain" id="PRO_0000315328" description="Capsid protein">
    <location>
        <begin position="1"/>
        <end position="736"/>
    </location>
</feature>
<feature type="region of interest" description="Disordered" evidence="2">
    <location>
        <begin position="633"/>
        <end position="692"/>
    </location>
</feature>
<feature type="compositionally biased region" description="Basic and acidic residues" evidence="2">
    <location>
        <begin position="650"/>
        <end position="664"/>
    </location>
</feature>
<dbReference type="EMBL" id="AY666122">
    <property type="protein sequence ID" value="ABV25035.1"/>
    <property type="molecule type" value="Genomic_DNA"/>
</dbReference>
<dbReference type="RefSeq" id="YP_003587868.1">
    <property type="nucleotide sequence ID" value="NC_014081.1"/>
</dbReference>
<dbReference type="SMR" id="A7XCE4"/>
<dbReference type="KEGG" id="vg:9086624"/>
<dbReference type="OrthoDB" id="3295at10239"/>
<dbReference type="Proteomes" id="UP000008257">
    <property type="component" value="Segment"/>
</dbReference>
<dbReference type="GO" id="GO:0039615">
    <property type="term" value="C:T=1 icosahedral viral capsid"/>
    <property type="evidence" value="ECO:0007669"/>
    <property type="project" value="UniProtKB-KW"/>
</dbReference>
<dbReference type="InterPro" id="IPR004219">
    <property type="entry name" value="TTvirus_Unk"/>
</dbReference>
<dbReference type="Pfam" id="PF02956">
    <property type="entry name" value="TT_ORF1"/>
    <property type="match status" value="1"/>
</dbReference>
<keyword id="KW-0167">Capsid protein</keyword>
<keyword id="KW-1185">Reference proteome</keyword>
<keyword id="KW-1140">T=1 icosahedral capsid protein</keyword>
<keyword id="KW-0946">Virion</keyword>
<organismHost>
    <name type="scientific">Homo sapiens</name>
    <name type="common">Human</name>
    <dbReference type="NCBI Taxonomy" id="9606"/>
</organismHost>
<sequence length="736" mass="86687">MAWYWWRRRRRRGWWKPRRRRWRRRRARRRGPARRHRARRRVRRRRGRWRRRYRRWRRRGGRRRHRKKLIIKQWQPNFIRHCYIIGYMPLIICGENTFSHNYATHSDDMLSTGPYGGGMTTTKFTLRILFDEYQRHLNFWTVSNQDLDLARYLGTKIIFFRHPTVDFVVQIHTQPPFQDTEITAPSIHPGMLILSKKHILIPSLKTRPSKKHYVKVRVGAPRLFQDKWYPQSELCDVTLLVIYATACDLQYPFGSPQTDNVCVNFQILGQPYYQHLKTALGLTEKTTYENHYKNNLYKKIKFYNTTETIAQLKPLVDATTNQTWSHYVNPNKLTTTPTSEITHNNTWYRGNAYNDKITDLPEIVKKSYYKATELAIPEAVKPTTDLFEYHAGIYSSIFLSPGRAYFETPGAYQDIIYNPFTDKGIGNIVWIDWLSKSDAVYSEKQSKCGIFDLPLWAAFFGYAEFCSKSTGDTAIAYNSRVCVRCPYTEPQLLNHNNPSQGYVFYSYNFGKGKMPGGSSQVPIRMRWKWYVCMFHQLEVMEAICQSGPFAYHSDEKKAVLGIKYKFDWKWGGNPISQQIVRHPCNGQTSSGNRVPRSVQAVDPKYVSLQLVWHSWDFRRGLFGQAGIKRMQQESDALTLSPVHRPKRPKRDTQVKEKTPEKDSDSAVQLRRLQPWIHSSQETKDEEEEIPEGPVQEQLLQQLQQQRLLRVQLESIAQEVLKIRRGHSLHPLLSSHA</sequence>
<protein>
    <recommendedName>
        <fullName>Capsid protein</fullName>
    </recommendedName>
</protein>
<comment type="function">
    <text evidence="1">Self assemble to form an icosahedral capsid.</text>
</comment>
<comment type="subcellular location">
    <subcellularLocation>
        <location evidence="3">Virion</location>
    </subcellularLocation>
</comment>
<comment type="similarity">
    <text evidence="3">Belongs to the anelloviridae capsid protein family.</text>
</comment>